<reference key="1">
    <citation type="journal article" date="2002" name="DNA Res.">
        <title>Complete genome structure of the thermophilic cyanobacterium Thermosynechococcus elongatus BP-1.</title>
        <authorList>
            <person name="Nakamura Y."/>
            <person name="Kaneko T."/>
            <person name="Sato S."/>
            <person name="Ikeuchi M."/>
            <person name="Katoh H."/>
            <person name="Sasamoto S."/>
            <person name="Watanabe A."/>
            <person name="Iriguchi M."/>
            <person name="Kawashima K."/>
            <person name="Kimura T."/>
            <person name="Kishida Y."/>
            <person name="Kiyokawa C."/>
            <person name="Kohara M."/>
            <person name="Matsumoto M."/>
            <person name="Matsuno A."/>
            <person name="Nakazaki N."/>
            <person name="Shimpo S."/>
            <person name="Sugimoto M."/>
            <person name="Takeuchi C."/>
            <person name="Yamada M."/>
            <person name="Tabata S."/>
        </authorList>
    </citation>
    <scope>NUCLEOTIDE SEQUENCE [LARGE SCALE GENOMIC DNA]</scope>
    <source>
        <strain>NIES-2133 / IAM M-273 / BP-1</strain>
    </source>
</reference>
<evidence type="ECO:0000255" key="1">
    <source>
        <dbReference type="HAMAP-Rule" id="MF_02002"/>
    </source>
</evidence>
<evidence type="ECO:0000305" key="2"/>
<comment type="function">
    <text evidence="1">Catalyzes the attachment of isoleucine to tRNA(Ile). As IleRS can inadvertently accommodate and process structurally similar amino acids such as valine, to avoid such errors it has two additional distinct tRNA(Ile)-dependent editing activities. One activity is designated as 'pretransfer' editing and involves the hydrolysis of activated Val-AMP. The other activity is designated 'posttransfer' editing and involves deacylation of mischarged Val-tRNA(Ile).</text>
</comment>
<comment type="catalytic activity">
    <reaction evidence="1">
        <text>tRNA(Ile) + L-isoleucine + ATP = L-isoleucyl-tRNA(Ile) + AMP + diphosphate</text>
        <dbReference type="Rhea" id="RHEA:11060"/>
        <dbReference type="Rhea" id="RHEA-COMP:9666"/>
        <dbReference type="Rhea" id="RHEA-COMP:9695"/>
        <dbReference type="ChEBI" id="CHEBI:30616"/>
        <dbReference type="ChEBI" id="CHEBI:33019"/>
        <dbReference type="ChEBI" id="CHEBI:58045"/>
        <dbReference type="ChEBI" id="CHEBI:78442"/>
        <dbReference type="ChEBI" id="CHEBI:78528"/>
        <dbReference type="ChEBI" id="CHEBI:456215"/>
        <dbReference type="EC" id="6.1.1.5"/>
    </reaction>
</comment>
<comment type="cofactor">
    <cofactor evidence="1">
        <name>Zn(2+)</name>
        <dbReference type="ChEBI" id="CHEBI:29105"/>
    </cofactor>
    <text evidence="1">Binds 1 zinc ion per subunit.</text>
</comment>
<comment type="subunit">
    <text evidence="1">Monomer.</text>
</comment>
<comment type="subcellular location">
    <subcellularLocation>
        <location evidence="1">Cytoplasm</location>
    </subcellularLocation>
</comment>
<comment type="domain">
    <text evidence="1">IleRS has two distinct active sites: one for aminoacylation and one for editing. The misactivated valine is translocated from the active site to the editing site, which sterically excludes the correctly activated isoleucine. The single editing site contains two valyl binding pockets, one specific for each substrate (Val-AMP or Val-tRNA(Ile)).</text>
</comment>
<comment type="similarity">
    <text evidence="1">Belongs to the class-I aminoacyl-tRNA synthetase family. IleS type 1 subfamily.</text>
</comment>
<comment type="sequence caution" evidence="2">
    <conflict type="erroneous initiation">
        <sequence resource="EMBL-CDS" id="BAC09882"/>
    </conflict>
</comment>
<protein>
    <recommendedName>
        <fullName evidence="1">Isoleucine--tRNA ligase</fullName>
        <ecNumber evidence="1">6.1.1.5</ecNumber>
    </recommendedName>
    <alternativeName>
        <fullName evidence="1">Isoleucyl-tRNA synthetase</fullName>
        <shortName evidence="1">IleRS</shortName>
    </alternativeName>
</protein>
<gene>
    <name evidence="1" type="primary">ileS</name>
    <name type="ordered locus">tlr2330</name>
</gene>
<name>SYI_THEVB</name>
<dbReference type="EC" id="6.1.1.5" evidence="1"/>
<dbReference type="EMBL" id="BA000039">
    <property type="protein sequence ID" value="BAC09882.1"/>
    <property type="status" value="ALT_INIT"/>
    <property type="molecule type" value="Genomic_DNA"/>
</dbReference>
<dbReference type="RefSeq" id="NP_683120.1">
    <property type="nucleotide sequence ID" value="NC_004113.1"/>
</dbReference>
<dbReference type="RefSeq" id="WP_164921027.1">
    <property type="nucleotide sequence ID" value="NC_004113.1"/>
</dbReference>
<dbReference type="SMR" id="Q8DGI7"/>
<dbReference type="STRING" id="197221.gene:10748949"/>
<dbReference type="EnsemblBacteria" id="BAC09882">
    <property type="protein sequence ID" value="BAC09882"/>
    <property type="gene ID" value="BAC09882"/>
</dbReference>
<dbReference type="KEGG" id="tel:tlr2330"/>
<dbReference type="PATRIC" id="fig|197221.4.peg.2442"/>
<dbReference type="eggNOG" id="COG0060">
    <property type="taxonomic scope" value="Bacteria"/>
</dbReference>
<dbReference type="Proteomes" id="UP000000440">
    <property type="component" value="Chromosome"/>
</dbReference>
<dbReference type="GO" id="GO:0005737">
    <property type="term" value="C:cytoplasm"/>
    <property type="evidence" value="ECO:0007669"/>
    <property type="project" value="UniProtKB-SubCell"/>
</dbReference>
<dbReference type="GO" id="GO:0002161">
    <property type="term" value="F:aminoacyl-tRNA deacylase activity"/>
    <property type="evidence" value="ECO:0007669"/>
    <property type="project" value="InterPro"/>
</dbReference>
<dbReference type="GO" id="GO:0005524">
    <property type="term" value="F:ATP binding"/>
    <property type="evidence" value="ECO:0007669"/>
    <property type="project" value="UniProtKB-UniRule"/>
</dbReference>
<dbReference type="GO" id="GO:0004822">
    <property type="term" value="F:isoleucine-tRNA ligase activity"/>
    <property type="evidence" value="ECO:0007669"/>
    <property type="project" value="UniProtKB-UniRule"/>
</dbReference>
<dbReference type="GO" id="GO:0000049">
    <property type="term" value="F:tRNA binding"/>
    <property type="evidence" value="ECO:0007669"/>
    <property type="project" value="InterPro"/>
</dbReference>
<dbReference type="GO" id="GO:0008270">
    <property type="term" value="F:zinc ion binding"/>
    <property type="evidence" value="ECO:0007669"/>
    <property type="project" value="UniProtKB-UniRule"/>
</dbReference>
<dbReference type="GO" id="GO:0006428">
    <property type="term" value="P:isoleucyl-tRNA aminoacylation"/>
    <property type="evidence" value="ECO:0007669"/>
    <property type="project" value="UniProtKB-UniRule"/>
</dbReference>
<dbReference type="CDD" id="cd07960">
    <property type="entry name" value="Anticodon_Ia_Ile_BEm"/>
    <property type="match status" value="1"/>
</dbReference>
<dbReference type="CDD" id="cd00818">
    <property type="entry name" value="IleRS_core"/>
    <property type="match status" value="1"/>
</dbReference>
<dbReference type="FunFam" id="1.10.730.20:FF:000001">
    <property type="entry name" value="Isoleucine--tRNA ligase"/>
    <property type="match status" value="1"/>
</dbReference>
<dbReference type="FunFam" id="3.40.50.620:FF:000128">
    <property type="entry name" value="Isoleucyl-tRNA synthetase 2, mitochondrial"/>
    <property type="match status" value="1"/>
</dbReference>
<dbReference type="FunFam" id="3.90.740.10:FF:000009">
    <property type="entry name" value="Isoleucyl-tRNA synthetase 2, mitochondrial"/>
    <property type="match status" value="1"/>
</dbReference>
<dbReference type="FunFam" id="3.40.50.620:FF:000111">
    <property type="entry name" value="Mitochondrial isoleucyl-tRNA synthetase"/>
    <property type="match status" value="1"/>
</dbReference>
<dbReference type="Gene3D" id="1.10.730.20">
    <property type="match status" value="1"/>
</dbReference>
<dbReference type="Gene3D" id="3.40.50.620">
    <property type="entry name" value="HUPs"/>
    <property type="match status" value="2"/>
</dbReference>
<dbReference type="Gene3D" id="1.10.10.830">
    <property type="entry name" value="Ile-tRNA synthetase CP2 domain-like"/>
    <property type="match status" value="1"/>
</dbReference>
<dbReference type="Gene3D" id="3.90.740.10">
    <property type="entry name" value="Valyl/Leucyl/Isoleucyl-tRNA synthetase, editing domain"/>
    <property type="match status" value="1"/>
</dbReference>
<dbReference type="HAMAP" id="MF_02002">
    <property type="entry name" value="Ile_tRNA_synth_type1"/>
    <property type="match status" value="1"/>
</dbReference>
<dbReference type="InterPro" id="IPR001412">
    <property type="entry name" value="aa-tRNA-synth_I_CS"/>
</dbReference>
<dbReference type="InterPro" id="IPR002300">
    <property type="entry name" value="aa-tRNA-synth_Ia"/>
</dbReference>
<dbReference type="InterPro" id="IPR033708">
    <property type="entry name" value="Anticodon_Ile_BEm"/>
</dbReference>
<dbReference type="InterPro" id="IPR002301">
    <property type="entry name" value="Ile-tRNA-ligase"/>
</dbReference>
<dbReference type="InterPro" id="IPR023585">
    <property type="entry name" value="Ile-tRNA-ligase_type1"/>
</dbReference>
<dbReference type="InterPro" id="IPR050081">
    <property type="entry name" value="Ile-tRNA_ligase"/>
</dbReference>
<dbReference type="InterPro" id="IPR013155">
    <property type="entry name" value="M/V/L/I-tRNA-synth_anticd-bd"/>
</dbReference>
<dbReference type="InterPro" id="IPR014729">
    <property type="entry name" value="Rossmann-like_a/b/a_fold"/>
</dbReference>
<dbReference type="InterPro" id="IPR009080">
    <property type="entry name" value="tRNAsynth_Ia_anticodon-bd"/>
</dbReference>
<dbReference type="InterPro" id="IPR009008">
    <property type="entry name" value="Val/Leu/Ile-tRNA-synth_edit"/>
</dbReference>
<dbReference type="InterPro" id="IPR010663">
    <property type="entry name" value="Znf_FPG/IleRS"/>
</dbReference>
<dbReference type="NCBIfam" id="TIGR00392">
    <property type="entry name" value="ileS"/>
    <property type="match status" value="1"/>
</dbReference>
<dbReference type="PANTHER" id="PTHR42765:SF1">
    <property type="entry name" value="ISOLEUCINE--TRNA LIGASE, MITOCHONDRIAL"/>
    <property type="match status" value="1"/>
</dbReference>
<dbReference type="PANTHER" id="PTHR42765">
    <property type="entry name" value="SOLEUCYL-TRNA SYNTHETASE"/>
    <property type="match status" value="1"/>
</dbReference>
<dbReference type="Pfam" id="PF08264">
    <property type="entry name" value="Anticodon_1"/>
    <property type="match status" value="1"/>
</dbReference>
<dbReference type="Pfam" id="PF00133">
    <property type="entry name" value="tRNA-synt_1"/>
    <property type="match status" value="1"/>
</dbReference>
<dbReference type="Pfam" id="PF06827">
    <property type="entry name" value="zf-FPG_IleRS"/>
    <property type="match status" value="1"/>
</dbReference>
<dbReference type="PRINTS" id="PR00984">
    <property type="entry name" value="TRNASYNTHILE"/>
</dbReference>
<dbReference type="SUPFAM" id="SSF47323">
    <property type="entry name" value="Anticodon-binding domain of a subclass of class I aminoacyl-tRNA synthetases"/>
    <property type="match status" value="1"/>
</dbReference>
<dbReference type="SUPFAM" id="SSF52374">
    <property type="entry name" value="Nucleotidylyl transferase"/>
    <property type="match status" value="1"/>
</dbReference>
<dbReference type="SUPFAM" id="SSF50677">
    <property type="entry name" value="ValRS/IleRS/LeuRS editing domain"/>
    <property type="match status" value="1"/>
</dbReference>
<dbReference type="PROSITE" id="PS00178">
    <property type="entry name" value="AA_TRNA_LIGASE_I"/>
    <property type="match status" value="1"/>
</dbReference>
<feature type="chain" id="PRO_0000098489" description="Isoleucine--tRNA ligase">
    <location>
        <begin position="1"/>
        <end position="953"/>
    </location>
</feature>
<feature type="short sequence motif" description="'HIGH' region">
    <location>
        <begin position="61"/>
        <end position="71"/>
    </location>
</feature>
<feature type="short sequence motif" description="'KMSKS' region">
    <location>
        <begin position="605"/>
        <end position="609"/>
    </location>
</feature>
<feature type="binding site" evidence="1">
    <location>
        <position position="564"/>
    </location>
    <ligand>
        <name>L-isoleucyl-5'-AMP</name>
        <dbReference type="ChEBI" id="CHEBI:178002"/>
    </ligand>
</feature>
<feature type="binding site" evidence="1">
    <location>
        <position position="608"/>
    </location>
    <ligand>
        <name>ATP</name>
        <dbReference type="ChEBI" id="CHEBI:30616"/>
    </ligand>
</feature>
<feature type="binding site" evidence="1">
    <location>
        <position position="922"/>
    </location>
    <ligand>
        <name>Zn(2+)</name>
        <dbReference type="ChEBI" id="CHEBI:29105"/>
    </ligand>
</feature>
<feature type="binding site" evidence="1">
    <location>
        <position position="925"/>
    </location>
    <ligand>
        <name>Zn(2+)</name>
        <dbReference type="ChEBI" id="CHEBI:29105"/>
    </ligand>
</feature>
<feature type="binding site" evidence="1">
    <location>
        <position position="942"/>
    </location>
    <ligand>
        <name>Zn(2+)</name>
        <dbReference type="ChEBI" id="CHEBI:29105"/>
    </ligand>
</feature>
<feature type="binding site" evidence="1">
    <location>
        <position position="945"/>
    </location>
    <ligand>
        <name>Zn(2+)</name>
        <dbReference type="ChEBI" id="CHEBI:29105"/>
    </ligand>
</feature>
<keyword id="KW-0030">Aminoacyl-tRNA synthetase</keyword>
<keyword id="KW-0067">ATP-binding</keyword>
<keyword id="KW-0963">Cytoplasm</keyword>
<keyword id="KW-0436">Ligase</keyword>
<keyword id="KW-0479">Metal-binding</keyword>
<keyword id="KW-0547">Nucleotide-binding</keyword>
<keyword id="KW-0648">Protein biosynthesis</keyword>
<keyword id="KW-1185">Reference proteome</keyword>
<keyword id="KW-0862">Zinc</keyword>
<proteinExistence type="inferred from homology"/>
<accession>Q8DGI7</accession>
<sequence>MTDATPDYKDTVNLPQTTFEMRANAATREPQLQAFWAQHKIYETLQQTNPGEVFILHDGPPYANGALHIGHALNKILKDIINKYQLLRGRKVHYRPGWDCHGLPIELKVLQNLKPEQRAQLTPLTLRQQAKEFALKTVAEQKQSFQRYGVWGDWAHPYLTLTPDYEAAQIGVFGEMVLRGYIYRGLKPVHWSPSSKTALAEAELEYPEGHTSRSLYAAFEVIELPQGLAKAWYNALGKLGVAIWTTTPWTIPANLAVSVNPDLTYALVEVQPSERYKHLIVAKDLVERLSDTLGRTLKVVATAKGADLEHSRYRHPLFEREGKILIGGDYVTTESGTGLVHTAPGHGLEDYGVGQRYGLPILSPVDENGCFTAEAGPFAGLNVLQEGNAAVIAALQECGALLKEEPYVHKYPYDWRTKKPTIFRATEQWFASVEGFRDAALRAIAEVKWIPAQGENRITAMVAERSDWCISRQRSWGVPIPVFYDKETGEPLLTAETIAHVQAIIRDRGSDAWWELSVAELLPESLRDQADRYEKGTDTMDVWFDSGSSWAAVLGDQQADLYLEGSDQHRGWFQSSLLTRVAVKGQAPYKAVLTHGFVLDEQGRKMSKSLGNVTDPREVIEGGKNQKQDPPYGADVLRLWVSSVDYANDVPIGKNILRQLADVYRKIRNTARFLLGNLHDFEPEQDMIPYAQLPALDRYMLHRLHEVFSEVTAAFDSFQFYRFFQTIQNLCVVDLSNFYLDIAKDRLYISAATGDRRRSCQTVLAIALQNLARAIAPVLPHLAEDIWQHLPFKTPYLSVFQSGWVQLSAQWQDNALAAEWQRLRQLRLEVNKVLEKARAEKLIGSSLEAKVWLYVADSEWRDRLAQMNPRDALSGNGVDELRYLFLVSQVELMPQPQAVDVPYVLEAEGLWIGVGHAQGEKCVRCWNYSESVGQSALHPQLCDRCQAALQGEF</sequence>
<organism>
    <name type="scientific">Thermosynechococcus vestitus (strain NIES-2133 / IAM M-273 / BP-1)</name>
    <dbReference type="NCBI Taxonomy" id="197221"/>
    <lineage>
        <taxon>Bacteria</taxon>
        <taxon>Bacillati</taxon>
        <taxon>Cyanobacteriota</taxon>
        <taxon>Cyanophyceae</taxon>
        <taxon>Acaryochloridales</taxon>
        <taxon>Thermosynechococcaceae</taxon>
        <taxon>Thermosynechococcus</taxon>
    </lineage>
</organism>